<reference key="1">
    <citation type="submission" date="2003-11" db="EMBL/GenBank/DDBJ databases">
        <title>Whole genome sequence of Porphyra yezoensis chloroplast.</title>
        <authorList>
            <person name="Kunimoto M."/>
            <person name="Morishima K."/>
            <person name="Yoshikawa M."/>
            <person name="Fukuda S."/>
            <person name="Kobayashi T."/>
            <person name="Kobayashi M."/>
            <person name="Okazaki T."/>
            <person name="Ohara I."/>
            <person name="Nakayama I."/>
        </authorList>
    </citation>
    <scope>NUCLEOTIDE SEQUENCE [LARGE SCALE GENOMIC DNA]</scope>
    <source>
        <strain>U-51</strain>
    </source>
</reference>
<geneLocation type="chloroplast"/>
<feature type="initiator methionine" description="Removed" evidence="1">
    <location>
        <position position="1"/>
    </location>
</feature>
<feature type="chain" id="PRO_0000277339" description="Phycobilisome rod-core linker polypeptide cpcG">
    <location>
        <begin position="2"/>
        <end position="232"/>
    </location>
</feature>
<feature type="domain" description="PBS-linker" evidence="2">
    <location>
        <begin position="11"/>
        <end position="191"/>
    </location>
</feature>
<gene>
    <name type="primary">cpcG</name>
</gene>
<dbReference type="EMBL" id="AP006715">
    <property type="protein sequence ID" value="BAE92489.1"/>
    <property type="molecule type" value="Genomic_DNA"/>
</dbReference>
<dbReference type="RefSeq" id="YP_537046.1">
    <property type="nucleotide sequence ID" value="NC_007932.1"/>
</dbReference>
<dbReference type="SMR" id="Q1XDC2"/>
<dbReference type="GeneID" id="3978880"/>
<dbReference type="GO" id="GO:0009535">
    <property type="term" value="C:chloroplast thylakoid membrane"/>
    <property type="evidence" value="ECO:0007669"/>
    <property type="project" value="UniProtKB-SubCell"/>
</dbReference>
<dbReference type="GO" id="GO:0030089">
    <property type="term" value="C:phycobilisome"/>
    <property type="evidence" value="ECO:0007669"/>
    <property type="project" value="UniProtKB-KW"/>
</dbReference>
<dbReference type="GO" id="GO:0015979">
    <property type="term" value="P:photosynthesis"/>
    <property type="evidence" value="ECO:0007669"/>
    <property type="project" value="UniProtKB-KW"/>
</dbReference>
<dbReference type="Gene3D" id="1.10.3130.20">
    <property type="entry name" value="Phycobilisome linker domain"/>
    <property type="match status" value="1"/>
</dbReference>
<dbReference type="InterPro" id="IPR001297">
    <property type="entry name" value="PBS_linker_dom"/>
</dbReference>
<dbReference type="InterPro" id="IPR038255">
    <property type="entry name" value="PBS_linker_sf"/>
</dbReference>
<dbReference type="InterPro" id="IPR016470">
    <property type="entry name" value="Phycobilisome"/>
</dbReference>
<dbReference type="PANTHER" id="PTHR34011">
    <property type="entry name" value="PHYCOBILISOME 32.1 KDA LINKER POLYPEPTIDE, PHYCOCYANIN-ASSOCIATED, ROD 2-RELATED"/>
    <property type="match status" value="1"/>
</dbReference>
<dbReference type="Pfam" id="PF00427">
    <property type="entry name" value="PBS_linker_poly"/>
    <property type="match status" value="1"/>
</dbReference>
<dbReference type="PIRSF" id="PIRSF005898">
    <property type="entry name" value="Phycobilisome_CpeC/CpcI"/>
    <property type="match status" value="1"/>
</dbReference>
<dbReference type="PROSITE" id="PS51445">
    <property type="entry name" value="PBS_LINKER"/>
    <property type="match status" value="1"/>
</dbReference>
<accession>Q1XDC2</accession>
<proteinExistence type="inferred from homology"/>
<protein>
    <recommendedName>
        <fullName>Phycobilisome rod-core linker polypeptide cpcG</fullName>
    </recommendedName>
</protein>
<name>PYG_PYRYE</name>
<comment type="function">
    <text evidence="1">Rod-core linker protein required for attachment of phycocyanin to allophycocyanin in cores of phycobilisomes.</text>
</comment>
<comment type="function">
    <text evidence="1">Linker polypeptides determine the state of aggregation and the location of the disk-shaped phycobiliprotein units within the phycobilisome and modulate their spectroscopic properties in order to mediate a directed and optimal energy transfer.</text>
</comment>
<comment type="subunit">
    <text evidence="1">The phycobilisome is a hemidiscoidal structure that is composed of two distinct substructures: a core complex and a number of rods radiating from the core.</text>
</comment>
<comment type="subcellular location">
    <subcellularLocation>
        <location>Plastid</location>
        <location>Chloroplast</location>
    </subcellularLocation>
    <subcellularLocation>
        <location evidence="1">Plastid</location>
        <location evidence="1">Chloroplast thylakoid membrane</location>
        <topology evidence="1">Peripheral membrane protein</topology>
        <orientation evidence="1">Stromal side</orientation>
    </subcellularLocation>
</comment>
<comment type="similarity">
    <text evidence="2">Belongs to the phycobilisome linker protein family.</text>
</comment>
<keyword id="KW-0042">Antenna complex</keyword>
<keyword id="KW-0150">Chloroplast</keyword>
<keyword id="KW-0472">Membrane</keyword>
<keyword id="KW-0602">Photosynthesis</keyword>
<keyword id="KW-0605">Phycobilisome</keyword>
<keyword id="KW-0934">Plastid</keyword>
<keyword id="KW-0793">Thylakoid</keyword>
<organism>
    <name type="scientific">Pyropia yezoensis</name>
    <name type="common">Susabi-nori</name>
    <name type="synonym">Porphyra yezoensis</name>
    <dbReference type="NCBI Taxonomy" id="2788"/>
    <lineage>
        <taxon>Eukaryota</taxon>
        <taxon>Rhodophyta</taxon>
        <taxon>Bangiophyceae</taxon>
        <taxon>Bangiales</taxon>
        <taxon>Bangiaceae</taxon>
        <taxon>Pyropia</taxon>
    </lineage>
</organism>
<evidence type="ECO:0000250" key="1"/>
<evidence type="ECO:0000255" key="2">
    <source>
        <dbReference type="PROSITE-ProRule" id="PRU00775"/>
    </source>
</evidence>
<sequence>MSIPLLKYSLSTQNQRVDGYEVSPGEEQPRAYNTDNLPSAVEMDEVIWAAYRQIFSEHQILSSTSDSNLESQLRFNQIRIKDFIRGLILSESFRKLNYDVNNNYRFVEICVQRILGRDVYNEREKLAWSVVIASKGLESFVNMLLDSDEYEENFGDSIVPYQRRRIIAQRSKGEMPFNLKTPRYGADFKEKFGMPQFIWQGPVRQFRPQEQRPKAGDPALFLGMVNDLALFK</sequence>